<dbReference type="EC" id="3.1.21.10" evidence="1"/>
<dbReference type="EMBL" id="BX842652">
    <property type="protein sequence ID" value="CAE80292.1"/>
    <property type="molecule type" value="Genomic_DNA"/>
</dbReference>
<dbReference type="SMR" id="Q6MKB6"/>
<dbReference type="STRING" id="264462.Bd2489"/>
<dbReference type="KEGG" id="bba:Bd2489"/>
<dbReference type="eggNOG" id="COG0817">
    <property type="taxonomic scope" value="Bacteria"/>
</dbReference>
<dbReference type="HOGENOM" id="CLU_091257_2_1_7"/>
<dbReference type="Proteomes" id="UP000008080">
    <property type="component" value="Chromosome"/>
</dbReference>
<dbReference type="GO" id="GO:0005737">
    <property type="term" value="C:cytoplasm"/>
    <property type="evidence" value="ECO:0007669"/>
    <property type="project" value="UniProtKB-SubCell"/>
</dbReference>
<dbReference type="GO" id="GO:0048476">
    <property type="term" value="C:Holliday junction resolvase complex"/>
    <property type="evidence" value="ECO:0007669"/>
    <property type="project" value="UniProtKB-UniRule"/>
</dbReference>
<dbReference type="GO" id="GO:0008821">
    <property type="term" value="F:crossover junction DNA endonuclease activity"/>
    <property type="evidence" value="ECO:0007669"/>
    <property type="project" value="UniProtKB-UniRule"/>
</dbReference>
<dbReference type="GO" id="GO:0003677">
    <property type="term" value="F:DNA binding"/>
    <property type="evidence" value="ECO:0007669"/>
    <property type="project" value="UniProtKB-KW"/>
</dbReference>
<dbReference type="GO" id="GO:0000287">
    <property type="term" value="F:magnesium ion binding"/>
    <property type="evidence" value="ECO:0007669"/>
    <property type="project" value="UniProtKB-UniRule"/>
</dbReference>
<dbReference type="GO" id="GO:0006310">
    <property type="term" value="P:DNA recombination"/>
    <property type="evidence" value="ECO:0007669"/>
    <property type="project" value="UniProtKB-UniRule"/>
</dbReference>
<dbReference type="GO" id="GO:0006281">
    <property type="term" value="P:DNA repair"/>
    <property type="evidence" value="ECO:0007669"/>
    <property type="project" value="UniProtKB-UniRule"/>
</dbReference>
<dbReference type="CDD" id="cd16962">
    <property type="entry name" value="RuvC"/>
    <property type="match status" value="1"/>
</dbReference>
<dbReference type="FunFam" id="3.30.420.10:FF:000002">
    <property type="entry name" value="Crossover junction endodeoxyribonuclease RuvC"/>
    <property type="match status" value="1"/>
</dbReference>
<dbReference type="Gene3D" id="3.30.420.10">
    <property type="entry name" value="Ribonuclease H-like superfamily/Ribonuclease H"/>
    <property type="match status" value="1"/>
</dbReference>
<dbReference type="HAMAP" id="MF_00034">
    <property type="entry name" value="RuvC"/>
    <property type="match status" value="1"/>
</dbReference>
<dbReference type="InterPro" id="IPR012337">
    <property type="entry name" value="RNaseH-like_sf"/>
</dbReference>
<dbReference type="InterPro" id="IPR036397">
    <property type="entry name" value="RNaseH_sf"/>
</dbReference>
<dbReference type="InterPro" id="IPR002176">
    <property type="entry name" value="X-over_junc_endoDNase_RuvC"/>
</dbReference>
<dbReference type="NCBIfam" id="TIGR00228">
    <property type="entry name" value="ruvC"/>
    <property type="match status" value="1"/>
</dbReference>
<dbReference type="PANTHER" id="PTHR30194">
    <property type="entry name" value="CROSSOVER JUNCTION ENDODEOXYRIBONUCLEASE RUVC"/>
    <property type="match status" value="1"/>
</dbReference>
<dbReference type="PANTHER" id="PTHR30194:SF3">
    <property type="entry name" value="CROSSOVER JUNCTION ENDODEOXYRIBONUCLEASE RUVC"/>
    <property type="match status" value="1"/>
</dbReference>
<dbReference type="Pfam" id="PF02075">
    <property type="entry name" value="RuvC"/>
    <property type="match status" value="1"/>
</dbReference>
<dbReference type="PRINTS" id="PR00696">
    <property type="entry name" value="RSOLVASERUVC"/>
</dbReference>
<dbReference type="SUPFAM" id="SSF53098">
    <property type="entry name" value="Ribonuclease H-like"/>
    <property type="match status" value="1"/>
</dbReference>
<accession>Q6MKB6</accession>
<reference key="1">
    <citation type="journal article" date="2004" name="Science">
        <title>A predator unmasked: life cycle of Bdellovibrio bacteriovorus from a genomic perspective.</title>
        <authorList>
            <person name="Rendulic S."/>
            <person name="Jagtap P."/>
            <person name="Rosinus A."/>
            <person name="Eppinger M."/>
            <person name="Baar C."/>
            <person name="Lanz C."/>
            <person name="Keller H."/>
            <person name="Lambert C."/>
            <person name="Evans K.J."/>
            <person name="Goesmann A."/>
            <person name="Meyer F."/>
            <person name="Sockett R.E."/>
            <person name="Schuster S.C."/>
        </authorList>
    </citation>
    <scope>NUCLEOTIDE SEQUENCE [LARGE SCALE GENOMIC DNA]</scope>
    <source>
        <strain>ATCC 15356 / DSM 50701 / NCIMB 9529 / HD100</strain>
    </source>
</reference>
<keyword id="KW-0963">Cytoplasm</keyword>
<keyword id="KW-0227">DNA damage</keyword>
<keyword id="KW-0233">DNA recombination</keyword>
<keyword id="KW-0234">DNA repair</keyword>
<keyword id="KW-0238">DNA-binding</keyword>
<keyword id="KW-0255">Endonuclease</keyword>
<keyword id="KW-0378">Hydrolase</keyword>
<keyword id="KW-0460">Magnesium</keyword>
<keyword id="KW-0479">Metal-binding</keyword>
<keyword id="KW-0540">Nuclease</keyword>
<keyword id="KW-1185">Reference proteome</keyword>
<evidence type="ECO:0000255" key="1">
    <source>
        <dbReference type="HAMAP-Rule" id="MF_00034"/>
    </source>
</evidence>
<comment type="function">
    <text evidence="1">The RuvA-RuvB-RuvC complex processes Holliday junction (HJ) DNA during genetic recombination and DNA repair. Endonuclease that resolves HJ intermediates. Cleaves cruciform DNA by making single-stranded nicks across the HJ at symmetrical positions within the homologous arms, yielding a 5'-phosphate and a 3'-hydroxyl group; requires a central core of homology in the junction. The consensus cleavage sequence is 5'-(A/T)TT(C/G)-3'. Cleavage occurs on the 3'-side of the TT dinucleotide at the point of strand exchange. HJ branch migration catalyzed by RuvA-RuvB allows RuvC to scan DNA until it finds its consensus sequence, where it cleaves and resolves the cruciform DNA.</text>
</comment>
<comment type="catalytic activity">
    <reaction evidence="1">
        <text>Endonucleolytic cleavage at a junction such as a reciprocal single-stranded crossover between two homologous DNA duplexes (Holliday junction).</text>
        <dbReference type="EC" id="3.1.21.10"/>
    </reaction>
</comment>
<comment type="cofactor">
    <cofactor evidence="1">
        <name>Mg(2+)</name>
        <dbReference type="ChEBI" id="CHEBI:18420"/>
    </cofactor>
    <text evidence="1">Binds 2 Mg(2+) ion per subunit.</text>
</comment>
<comment type="subunit">
    <text evidence="1">Homodimer which binds Holliday junction (HJ) DNA. The HJ becomes 2-fold symmetrical on binding to RuvC with unstacked arms; it has a different conformation from HJ DNA in complex with RuvA. In the full resolvosome a probable DNA-RuvA(4)-RuvB(12)-RuvC(2) complex forms which resolves the HJ.</text>
</comment>
<comment type="subcellular location">
    <subcellularLocation>
        <location evidence="1">Cytoplasm</location>
    </subcellularLocation>
</comment>
<comment type="similarity">
    <text evidence="1">Belongs to the RuvC family.</text>
</comment>
<gene>
    <name evidence="1" type="primary">ruvC</name>
    <name type="ordered locus">Bd2489</name>
</gene>
<name>RUVC_BDEBA</name>
<feature type="chain" id="PRO_0000225123" description="Crossover junction endodeoxyribonuclease RuvC">
    <location>
        <begin position="1"/>
        <end position="168"/>
    </location>
</feature>
<feature type="active site" evidence="1">
    <location>
        <position position="9"/>
    </location>
</feature>
<feature type="active site" evidence="1">
    <location>
        <position position="69"/>
    </location>
</feature>
<feature type="active site" evidence="1">
    <location>
        <position position="141"/>
    </location>
</feature>
<feature type="binding site" evidence="1">
    <location>
        <position position="9"/>
    </location>
    <ligand>
        <name>Mg(2+)</name>
        <dbReference type="ChEBI" id="CHEBI:18420"/>
        <label>1</label>
    </ligand>
</feature>
<feature type="binding site" evidence="1">
    <location>
        <position position="69"/>
    </location>
    <ligand>
        <name>Mg(2+)</name>
        <dbReference type="ChEBI" id="CHEBI:18420"/>
        <label>2</label>
    </ligand>
</feature>
<feature type="binding site" evidence="1">
    <location>
        <position position="141"/>
    </location>
    <ligand>
        <name>Mg(2+)</name>
        <dbReference type="ChEBI" id="CHEBI:18420"/>
        <label>1</label>
    </ligand>
</feature>
<protein>
    <recommendedName>
        <fullName evidence="1">Crossover junction endodeoxyribonuclease RuvC</fullName>
        <ecNumber evidence="1">3.1.21.10</ecNumber>
    </recommendedName>
    <alternativeName>
        <fullName evidence="1">Holliday junction nuclease RuvC</fullName>
    </alternativeName>
    <alternativeName>
        <fullName evidence="1">Holliday junction resolvase RuvC</fullName>
    </alternativeName>
</protein>
<organism>
    <name type="scientific">Bdellovibrio bacteriovorus (strain ATCC 15356 / DSM 50701 / NCIMB 9529 / HD100)</name>
    <dbReference type="NCBI Taxonomy" id="264462"/>
    <lineage>
        <taxon>Bacteria</taxon>
        <taxon>Pseudomonadati</taxon>
        <taxon>Bdellovibrionota</taxon>
        <taxon>Bdellovibrionia</taxon>
        <taxon>Bdellovibrionales</taxon>
        <taxon>Pseudobdellovibrionaceae</taxon>
        <taxon>Bdellovibrio</taxon>
    </lineage>
</organism>
<sequence length="168" mass="18158">MSLVILGVDPGSRITGFGVVRVANGKIEHINHGVIVMDGDDAFPRRMTELGSAFREVMEKYKPEQVVIEKIFLGKNADSAFKLGHARGVIMYEAGLGGAEVQEYATRSVKKGVTGNGGASKEDVQAILKVMLSLKTISRIDASDALAMACYHAFEMKKKALMQRAVSL</sequence>
<proteinExistence type="inferred from homology"/>